<feature type="chain" id="PRO_1000043260" description="Pantothenate kinase">
    <location>
        <begin position="1"/>
        <end position="331"/>
    </location>
</feature>
<feature type="binding site" evidence="1">
    <location>
        <begin position="109"/>
        <end position="116"/>
    </location>
    <ligand>
        <name>ATP</name>
        <dbReference type="ChEBI" id="CHEBI:30616"/>
    </ligand>
</feature>
<accession>A6UEK1</accession>
<proteinExistence type="inferred from homology"/>
<sequence>MSIAAKDIEPADIPGNLQGGEYSPYHVFSAEEWSRFRADTPLTLTADEVQRLRSLNDPVDLDEVRRIYLSLSRLLSAHVEASQILFRQRTRFLSMSNETKTPFVIGVAGSVAVGKSTTARILAELLARWPSSPKVDLVTTDGFLYPNAVLQRESLMDRKGFPESYDIGALLRFLSAIKAGRPNVKAPTYSHLTYDVIPDQFQLVDRPDILVFEGINVLQSRDLPADGKIVPMVSDFFDFSIYIDAEESLIHSWYVNRFMRLRETAFQNPQSFFHRYATISEDAARAIAEGLWHNINLKNLHQNILPTRPRADLILQKGPSHLTQTVALRKL</sequence>
<protein>
    <recommendedName>
        <fullName evidence="1">Pantothenate kinase</fullName>
        <ecNumber evidence="1">2.7.1.33</ecNumber>
    </recommendedName>
    <alternativeName>
        <fullName evidence="1">Pantothenic acid kinase</fullName>
    </alternativeName>
</protein>
<organism>
    <name type="scientific">Sinorhizobium medicae (strain WSM419)</name>
    <name type="common">Ensifer medicae</name>
    <dbReference type="NCBI Taxonomy" id="366394"/>
    <lineage>
        <taxon>Bacteria</taxon>
        <taxon>Pseudomonadati</taxon>
        <taxon>Pseudomonadota</taxon>
        <taxon>Alphaproteobacteria</taxon>
        <taxon>Hyphomicrobiales</taxon>
        <taxon>Rhizobiaceae</taxon>
        <taxon>Sinorhizobium/Ensifer group</taxon>
        <taxon>Sinorhizobium</taxon>
    </lineage>
</organism>
<comment type="catalytic activity">
    <reaction evidence="1">
        <text>(R)-pantothenate + ATP = (R)-4'-phosphopantothenate + ADP + H(+)</text>
        <dbReference type="Rhea" id="RHEA:16373"/>
        <dbReference type="ChEBI" id="CHEBI:10986"/>
        <dbReference type="ChEBI" id="CHEBI:15378"/>
        <dbReference type="ChEBI" id="CHEBI:29032"/>
        <dbReference type="ChEBI" id="CHEBI:30616"/>
        <dbReference type="ChEBI" id="CHEBI:456216"/>
        <dbReference type="EC" id="2.7.1.33"/>
    </reaction>
</comment>
<comment type="pathway">
    <text evidence="1">Cofactor biosynthesis; coenzyme A biosynthesis; CoA from (R)-pantothenate: step 1/5.</text>
</comment>
<comment type="subcellular location">
    <subcellularLocation>
        <location evidence="1">Cytoplasm</location>
    </subcellularLocation>
</comment>
<comment type="similarity">
    <text evidence="1">Belongs to the prokaryotic pantothenate kinase family.</text>
</comment>
<reference key="1">
    <citation type="submission" date="2007-06" db="EMBL/GenBank/DDBJ databases">
        <title>Complete sequence of Sinorhizobium medicae WSM419 chromosome.</title>
        <authorList>
            <consortium name="US DOE Joint Genome Institute"/>
            <person name="Copeland A."/>
            <person name="Lucas S."/>
            <person name="Lapidus A."/>
            <person name="Barry K."/>
            <person name="Glavina del Rio T."/>
            <person name="Dalin E."/>
            <person name="Tice H."/>
            <person name="Pitluck S."/>
            <person name="Chain P."/>
            <person name="Malfatti S."/>
            <person name="Shin M."/>
            <person name="Vergez L."/>
            <person name="Schmutz J."/>
            <person name="Larimer F."/>
            <person name="Land M."/>
            <person name="Hauser L."/>
            <person name="Kyrpides N."/>
            <person name="Mikhailova N."/>
            <person name="Reeve W.G."/>
            <person name="Richardson P."/>
        </authorList>
    </citation>
    <scope>NUCLEOTIDE SEQUENCE [LARGE SCALE GENOMIC DNA]</scope>
    <source>
        <strain>WSM419</strain>
    </source>
</reference>
<keyword id="KW-0067">ATP-binding</keyword>
<keyword id="KW-0173">Coenzyme A biosynthesis</keyword>
<keyword id="KW-0963">Cytoplasm</keyword>
<keyword id="KW-0418">Kinase</keyword>
<keyword id="KW-0547">Nucleotide-binding</keyword>
<keyword id="KW-0808">Transferase</keyword>
<gene>
    <name evidence="1" type="primary">coaA</name>
    <name type="ordered locus">Smed_3257</name>
</gene>
<evidence type="ECO:0000255" key="1">
    <source>
        <dbReference type="HAMAP-Rule" id="MF_00215"/>
    </source>
</evidence>
<dbReference type="EC" id="2.7.1.33" evidence="1"/>
<dbReference type="EMBL" id="CP000738">
    <property type="protein sequence ID" value="ABR62081.1"/>
    <property type="molecule type" value="Genomic_DNA"/>
</dbReference>
<dbReference type="RefSeq" id="WP_012067462.1">
    <property type="nucleotide sequence ID" value="NC_009636.1"/>
</dbReference>
<dbReference type="RefSeq" id="YP_001328916.1">
    <property type="nucleotide sequence ID" value="NC_009636.1"/>
</dbReference>
<dbReference type="SMR" id="A6UEK1"/>
<dbReference type="STRING" id="366394.Smed_3257"/>
<dbReference type="GeneID" id="61610839"/>
<dbReference type="KEGG" id="smd:Smed_3257"/>
<dbReference type="PATRIC" id="fig|366394.8.peg.6497"/>
<dbReference type="eggNOG" id="COG1072">
    <property type="taxonomic scope" value="Bacteria"/>
</dbReference>
<dbReference type="HOGENOM" id="CLU_053818_1_1_5"/>
<dbReference type="OrthoDB" id="1550976at2"/>
<dbReference type="UniPathway" id="UPA00241">
    <property type="reaction ID" value="UER00352"/>
</dbReference>
<dbReference type="Proteomes" id="UP000001108">
    <property type="component" value="Chromosome"/>
</dbReference>
<dbReference type="GO" id="GO:0005737">
    <property type="term" value="C:cytoplasm"/>
    <property type="evidence" value="ECO:0007669"/>
    <property type="project" value="UniProtKB-SubCell"/>
</dbReference>
<dbReference type="GO" id="GO:0005524">
    <property type="term" value="F:ATP binding"/>
    <property type="evidence" value="ECO:0007669"/>
    <property type="project" value="UniProtKB-UniRule"/>
</dbReference>
<dbReference type="GO" id="GO:0004594">
    <property type="term" value="F:pantothenate kinase activity"/>
    <property type="evidence" value="ECO:0007669"/>
    <property type="project" value="UniProtKB-UniRule"/>
</dbReference>
<dbReference type="GO" id="GO:0015937">
    <property type="term" value="P:coenzyme A biosynthetic process"/>
    <property type="evidence" value="ECO:0007669"/>
    <property type="project" value="UniProtKB-UniRule"/>
</dbReference>
<dbReference type="CDD" id="cd02025">
    <property type="entry name" value="PanK"/>
    <property type="match status" value="1"/>
</dbReference>
<dbReference type="Gene3D" id="3.40.50.300">
    <property type="entry name" value="P-loop containing nucleotide triphosphate hydrolases"/>
    <property type="match status" value="1"/>
</dbReference>
<dbReference type="HAMAP" id="MF_00215">
    <property type="entry name" value="Pantothen_kinase_1"/>
    <property type="match status" value="1"/>
</dbReference>
<dbReference type="InterPro" id="IPR027417">
    <property type="entry name" value="P-loop_NTPase"/>
</dbReference>
<dbReference type="InterPro" id="IPR004566">
    <property type="entry name" value="PanK"/>
</dbReference>
<dbReference type="InterPro" id="IPR006083">
    <property type="entry name" value="PRK/URK"/>
</dbReference>
<dbReference type="NCBIfam" id="TIGR00554">
    <property type="entry name" value="panK_bact"/>
    <property type="match status" value="1"/>
</dbReference>
<dbReference type="PANTHER" id="PTHR10285">
    <property type="entry name" value="URIDINE KINASE"/>
    <property type="match status" value="1"/>
</dbReference>
<dbReference type="Pfam" id="PF00485">
    <property type="entry name" value="PRK"/>
    <property type="match status" value="1"/>
</dbReference>
<dbReference type="PIRSF" id="PIRSF000545">
    <property type="entry name" value="Pantothenate_kin"/>
    <property type="match status" value="1"/>
</dbReference>
<dbReference type="SUPFAM" id="SSF52540">
    <property type="entry name" value="P-loop containing nucleoside triphosphate hydrolases"/>
    <property type="match status" value="1"/>
</dbReference>
<name>COAA_SINMW</name>